<keyword id="KW-0963">Cytoplasm</keyword>
<keyword id="KW-0274">FAD</keyword>
<keyword id="KW-0285">Flavoprotein</keyword>
<keyword id="KW-0489">Methyltransferase</keyword>
<keyword id="KW-0511">Multifunctional enzyme</keyword>
<keyword id="KW-0560">Oxidoreductase</keyword>
<keyword id="KW-0949">S-adenosyl-L-methionine</keyword>
<keyword id="KW-0808">Transferase</keyword>
<keyword id="KW-0819">tRNA processing</keyword>
<feature type="chain" id="PRO_1000065005" description="tRNA 5-methylaminomethyl-2-thiouridine biosynthesis bifunctional protein MnmC">
    <location>
        <begin position="1"/>
        <end position="658"/>
    </location>
</feature>
<feature type="region of interest" description="tRNA (mnm(5)s(2)U34)-methyltransferase">
    <location>
        <begin position="1"/>
        <end position="236"/>
    </location>
</feature>
<feature type="region of interest" description="FAD-dependent cmnm(5)s(2)U34 oxidoreductase">
    <location>
        <begin position="265"/>
        <end position="658"/>
    </location>
</feature>
<dbReference type="EC" id="2.1.1.61" evidence="1"/>
<dbReference type="EC" id="1.5.-.-" evidence="1"/>
<dbReference type="EMBL" id="CP000076">
    <property type="protein sequence ID" value="AAY93587.1"/>
    <property type="molecule type" value="Genomic_DNA"/>
</dbReference>
<dbReference type="RefSeq" id="WP_011062602.1">
    <property type="nucleotide sequence ID" value="NC_004129.6"/>
</dbReference>
<dbReference type="SMR" id="Q4K8K9"/>
<dbReference type="STRING" id="220664.PFL_4332"/>
<dbReference type="KEGG" id="pfl:PFL_4332"/>
<dbReference type="PATRIC" id="fig|220664.5.peg.4437"/>
<dbReference type="eggNOG" id="COG0665">
    <property type="taxonomic scope" value="Bacteria"/>
</dbReference>
<dbReference type="eggNOG" id="COG4121">
    <property type="taxonomic scope" value="Bacteria"/>
</dbReference>
<dbReference type="HOGENOM" id="CLU_022427_1_0_6"/>
<dbReference type="Proteomes" id="UP000008540">
    <property type="component" value="Chromosome"/>
</dbReference>
<dbReference type="GO" id="GO:0005737">
    <property type="term" value="C:cytoplasm"/>
    <property type="evidence" value="ECO:0007669"/>
    <property type="project" value="UniProtKB-SubCell"/>
</dbReference>
<dbReference type="GO" id="GO:0050660">
    <property type="term" value="F:flavin adenine dinucleotide binding"/>
    <property type="evidence" value="ECO:0007669"/>
    <property type="project" value="UniProtKB-UniRule"/>
</dbReference>
<dbReference type="GO" id="GO:0016645">
    <property type="term" value="F:oxidoreductase activity, acting on the CH-NH group of donors"/>
    <property type="evidence" value="ECO:0007669"/>
    <property type="project" value="InterPro"/>
</dbReference>
<dbReference type="GO" id="GO:0004808">
    <property type="term" value="F:tRNA (5-methylaminomethyl-2-thiouridylate)(34)-methyltransferase activity"/>
    <property type="evidence" value="ECO:0007669"/>
    <property type="project" value="UniProtKB-EC"/>
</dbReference>
<dbReference type="GO" id="GO:0032259">
    <property type="term" value="P:methylation"/>
    <property type="evidence" value="ECO:0007669"/>
    <property type="project" value="UniProtKB-KW"/>
</dbReference>
<dbReference type="GO" id="GO:0002098">
    <property type="term" value="P:tRNA wobble uridine modification"/>
    <property type="evidence" value="ECO:0007669"/>
    <property type="project" value="TreeGrafter"/>
</dbReference>
<dbReference type="Gene3D" id="3.30.9.10">
    <property type="entry name" value="D-Amino Acid Oxidase, subunit A, domain 2"/>
    <property type="match status" value="1"/>
</dbReference>
<dbReference type="Gene3D" id="3.50.50.60">
    <property type="entry name" value="FAD/NAD(P)-binding domain"/>
    <property type="match status" value="1"/>
</dbReference>
<dbReference type="Gene3D" id="3.40.50.150">
    <property type="entry name" value="Vaccinia Virus protein VP39"/>
    <property type="match status" value="1"/>
</dbReference>
<dbReference type="HAMAP" id="MF_01102">
    <property type="entry name" value="MnmC"/>
    <property type="match status" value="1"/>
</dbReference>
<dbReference type="InterPro" id="IPR006076">
    <property type="entry name" value="FAD-dep_OxRdtase"/>
</dbReference>
<dbReference type="InterPro" id="IPR036188">
    <property type="entry name" value="FAD/NAD-bd_sf"/>
</dbReference>
<dbReference type="InterPro" id="IPR008471">
    <property type="entry name" value="MnmC-like_methylTransf"/>
</dbReference>
<dbReference type="InterPro" id="IPR029063">
    <property type="entry name" value="SAM-dependent_MTases_sf"/>
</dbReference>
<dbReference type="InterPro" id="IPR023032">
    <property type="entry name" value="tRNA_MAMT_biosynth_bifunc_MnmC"/>
</dbReference>
<dbReference type="InterPro" id="IPR047785">
    <property type="entry name" value="tRNA_MNMC2"/>
</dbReference>
<dbReference type="InterPro" id="IPR017610">
    <property type="entry name" value="tRNA_S-uridine_synth_MnmC_C"/>
</dbReference>
<dbReference type="NCBIfam" id="TIGR03197">
    <property type="entry name" value="MnmC_Cterm"/>
    <property type="match status" value="1"/>
</dbReference>
<dbReference type="NCBIfam" id="NF002481">
    <property type="entry name" value="PRK01747.1-2"/>
    <property type="match status" value="1"/>
</dbReference>
<dbReference type="NCBIfam" id="NF033855">
    <property type="entry name" value="tRNA_MNMC2"/>
    <property type="match status" value="1"/>
</dbReference>
<dbReference type="PANTHER" id="PTHR13847">
    <property type="entry name" value="SARCOSINE DEHYDROGENASE-RELATED"/>
    <property type="match status" value="1"/>
</dbReference>
<dbReference type="PANTHER" id="PTHR13847:SF283">
    <property type="entry name" value="TRNA 5-METHYLAMINOMETHYL-2-THIOURIDINE BIOSYNTHESIS BIFUNCTIONAL PROTEIN MNMC"/>
    <property type="match status" value="1"/>
</dbReference>
<dbReference type="Pfam" id="PF01266">
    <property type="entry name" value="DAO"/>
    <property type="match status" value="1"/>
</dbReference>
<dbReference type="Pfam" id="PF05430">
    <property type="entry name" value="Methyltransf_30"/>
    <property type="match status" value="1"/>
</dbReference>
<dbReference type="SUPFAM" id="SSF51905">
    <property type="entry name" value="FAD/NAD(P)-binding domain"/>
    <property type="match status" value="1"/>
</dbReference>
<dbReference type="SUPFAM" id="SSF53335">
    <property type="entry name" value="S-adenosyl-L-methionine-dependent methyltransferases"/>
    <property type="match status" value="1"/>
</dbReference>
<accession>Q4K8K9</accession>
<protein>
    <recommendedName>
        <fullName evidence="1">tRNA 5-methylaminomethyl-2-thiouridine biosynthesis bifunctional protein MnmC</fullName>
        <shortName evidence="1">tRNA mnm(5)s(2)U biosynthesis bifunctional protein</shortName>
    </recommendedName>
    <domain>
        <recommendedName>
            <fullName evidence="1">tRNA (mnm(5)s(2)U34)-methyltransferase</fullName>
            <ecNumber evidence="1">2.1.1.61</ecNumber>
        </recommendedName>
    </domain>
    <domain>
        <recommendedName>
            <fullName evidence="1">FAD-dependent cmnm(5)s(2)U34 oxidoreductase</fullName>
            <ecNumber evidence="1">1.5.-.-</ecNumber>
        </recommendedName>
    </domain>
</protein>
<reference key="1">
    <citation type="journal article" date="2005" name="Nat. Biotechnol.">
        <title>Complete genome sequence of the plant commensal Pseudomonas fluorescens Pf-5.</title>
        <authorList>
            <person name="Paulsen I.T."/>
            <person name="Press C.M."/>
            <person name="Ravel J."/>
            <person name="Kobayashi D.Y."/>
            <person name="Myers G.S.A."/>
            <person name="Mavrodi D.V."/>
            <person name="DeBoy R.T."/>
            <person name="Seshadri R."/>
            <person name="Ren Q."/>
            <person name="Madupu R."/>
            <person name="Dodson R.J."/>
            <person name="Durkin A.S."/>
            <person name="Brinkac L.M."/>
            <person name="Daugherty S.C."/>
            <person name="Sullivan S.A."/>
            <person name="Rosovitz M.J."/>
            <person name="Gwinn M.L."/>
            <person name="Zhou L."/>
            <person name="Schneider D.J."/>
            <person name="Cartinhour S.W."/>
            <person name="Nelson W.C."/>
            <person name="Weidman J."/>
            <person name="Watkins K."/>
            <person name="Tran K."/>
            <person name="Khouri H."/>
            <person name="Pierson E.A."/>
            <person name="Pierson L.S. III"/>
            <person name="Thomashow L.S."/>
            <person name="Loper J.E."/>
        </authorList>
    </citation>
    <scope>NUCLEOTIDE SEQUENCE [LARGE SCALE GENOMIC DNA]</scope>
    <source>
        <strain>ATCC BAA-477 / NRRL B-23932 / Pf-5</strain>
    </source>
</reference>
<organism>
    <name type="scientific">Pseudomonas fluorescens (strain ATCC BAA-477 / NRRL B-23932 / Pf-5)</name>
    <dbReference type="NCBI Taxonomy" id="220664"/>
    <lineage>
        <taxon>Bacteria</taxon>
        <taxon>Pseudomonadati</taxon>
        <taxon>Pseudomonadota</taxon>
        <taxon>Gammaproteobacteria</taxon>
        <taxon>Pseudomonadales</taxon>
        <taxon>Pseudomonadaceae</taxon>
        <taxon>Pseudomonas</taxon>
    </lineage>
</organism>
<comment type="function">
    <text evidence="1">Catalyzes the last two steps in the biosynthesis of 5-methylaminomethyl-2-thiouridine (mnm(5)s(2)U) at the wobble position (U34) in tRNA. Catalyzes the FAD-dependent demodification of cmnm(5)s(2)U34 to nm(5)s(2)U34, followed by the transfer of a methyl group from S-adenosyl-L-methionine to nm(5)s(2)U34, to form mnm(5)s(2)U34.</text>
</comment>
<comment type="catalytic activity">
    <reaction evidence="1">
        <text>5-aminomethyl-2-thiouridine(34) in tRNA + S-adenosyl-L-methionine = 5-methylaminomethyl-2-thiouridine(34) in tRNA + S-adenosyl-L-homocysteine + H(+)</text>
        <dbReference type="Rhea" id="RHEA:19569"/>
        <dbReference type="Rhea" id="RHEA-COMP:10195"/>
        <dbReference type="Rhea" id="RHEA-COMP:10197"/>
        <dbReference type="ChEBI" id="CHEBI:15378"/>
        <dbReference type="ChEBI" id="CHEBI:57856"/>
        <dbReference type="ChEBI" id="CHEBI:59789"/>
        <dbReference type="ChEBI" id="CHEBI:74454"/>
        <dbReference type="ChEBI" id="CHEBI:74455"/>
        <dbReference type="EC" id="2.1.1.61"/>
    </reaction>
</comment>
<comment type="cofactor">
    <cofactor evidence="1">
        <name>FAD</name>
        <dbReference type="ChEBI" id="CHEBI:57692"/>
    </cofactor>
</comment>
<comment type="subcellular location">
    <subcellularLocation>
        <location evidence="1">Cytoplasm</location>
    </subcellularLocation>
</comment>
<comment type="similarity">
    <text evidence="1">In the N-terminal section; belongs to the methyltransferase superfamily. tRNA (mnm(5)s(2)U34)-methyltransferase family.</text>
</comment>
<comment type="similarity">
    <text evidence="1">In the C-terminal section; belongs to the DAO family.</text>
</comment>
<evidence type="ECO:0000255" key="1">
    <source>
        <dbReference type="HAMAP-Rule" id="MF_01102"/>
    </source>
</evidence>
<proteinExistence type="inferred from homology"/>
<sequence length="658" mass="71873">MIPELPHAQLDWDDQGRPRSRVFDDVYFSSESGLDETRHVFIEQNRLGQRFAALADGERFVIGETGFGTGLNFLCAWQLFQQQAPTGARLHFVSVEKYPLSPADLQRALALWPELASFSAPLLEQYVAVHGGFQRIVLEGGRVILTLLIGDALEQLPQLDAQVDAWFLDGFAPAKNPDMWTAELFAELARLAAPGSTISTFTSTGWVRRLLNSAGFKMKRTPGIGHKWEVLRGEFLGWPEDAPAPARARPWFARPALGEKTALVIGGGLAGCASAASLAARGWQVQLLERHAELAREASGNPQGVLYLKLSAHGTALSQMILSGFGYTRRQLEHLQRGQDWDGCGVLQLAFNAKEAERQAQLAAAFPADLLHLLDQPQAQARAGIGLEHGGLFYPEGGWVHPPALCQWQASHPRIQVLAHREVLELRRVDEQWQAWDGDRMLASAAVVILAGAAEIKRFPASADLPLKRIRGQITRLPQTAQSQSLATVVCAEGYVAPARLGEHTLGASFDFKSQDLTPTSAEHAGNLEMLREISSDLLQRLGAEQLPLDSLQGRAAFRCTSPDYLPIVGPLADPLAFAETYAALGKDARQVPDLPCPWLDGLYINSGHGSRGLITAPLSGELLAAWLENEPLPLPRSVAEACHPNRFALRRLIRGKA</sequence>
<name>MNMC_PSEF5</name>
<gene>
    <name evidence="1" type="primary">mnmC</name>
    <name type="ordered locus">PFL_4332</name>
</gene>